<evidence type="ECO:0000255" key="1">
    <source>
        <dbReference type="HAMAP-Rule" id="MF_00777"/>
    </source>
</evidence>
<evidence type="ECO:0000305" key="2"/>
<sequence>MSKKAPAKEGKKLPRAATWYEIDMEKGVFRFKNKLCPKCGSVMAFHREPVPRWHCGKCGFTQFQR</sequence>
<name>RS27A_PYRCJ</name>
<feature type="chain" id="PRO_1000046819" description="Small ribosomal subunit protein eS31">
    <location>
        <begin position="1"/>
        <end position="65"/>
    </location>
</feature>
<feature type="zinc finger region" description="C4-type" evidence="1">
    <location>
        <begin position="36"/>
        <end position="58"/>
    </location>
</feature>
<feature type="binding site" evidence="1">
    <location>
        <position position="36"/>
    </location>
    <ligand>
        <name>Zn(2+)</name>
        <dbReference type="ChEBI" id="CHEBI:29105"/>
    </ligand>
</feature>
<feature type="binding site" evidence="1">
    <location>
        <position position="39"/>
    </location>
    <ligand>
        <name>Zn(2+)</name>
        <dbReference type="ChEBI" id="CHEBI:29105"/>
    </ligand>
</feature>
<feature type="binding site" evidence="1">
    <location>
        <position position="55"/>
    </location>
    <ligand>
        <name>Zn(2+)</name>
        <dbReference type="ChEBI" id="CHEBI:29105"/>
    </ligand>
</feature>
<feature type="binding site" evidence="1">
    <location>
        <position position="58"/>
    </location>
    <ligand>
        <name>Zn(2+)</name>
        <dbReference type="ChEBI" id="CHEBI:29105"/>
    </ligand>
</feature>
<reference key="1">
    <citation type="submission" date="2007-02" db="EMBL/GenBank/DDBJ databases">
        <title>Complete sequence of Pyrobaculum calidifontis JCM 11548.</title>
        <authorList>
            <consortium name="US DOE Joint Genome Institute"/>
            <person name="Copeland A."/>
            <person name="Lucas S."/>
            <person name="Lapidus A."/>
            <person name="Barry K."/>
            <person name="Glavina del Rio T."/>
            <person name="Dalin E."/>
            <person name="Tice H."/>
            <person name="Pitluck S."/>
            <person name="Chain P."/>
            <person name="Malfatti S."/>
            <person name="Shin M."/>
            <person name="Vergez L."/>
            <person name="Schmutz J."/>
            <person name="Larimer F."/>
            <person name="Land M."/>
            <person name="Hauser L."/>
            <person name="Kyrpides N."/>
            <person name="Mikhailova N."/>
            <person name="Cozen A.E."/>
            <person name="Fitz-Gibbon S.T."/>
            <person name="House C.H."/>
            <person name="Saltikov C."/>
            <person name="Lowe T.M."/>
            <person name="Richardson P."/>
        </authorList>
    </citation>
    <scope>NUCLEOTIDE SEQUENCE [LARGE SCALE GENOMIC DNA]</scope>
    <source>
        <strain>DSM 21063 / JCM 11548 / VA1</strain>
    </source>
</reference>
<protein>
    <recommendedName>
        <fullName evidence="1">Small ribosomal subunit protein eS31</fullName>
    </recommendedName>
    <alternativeName>
        <fullName evidence="2">30S ribosomal protein S27ae</fullName>
    </alternativeName>
</protein>
<dbReference type="EMBL" id="CP000561">
    <property type="protein sequence ID" value="ABO07742.1"/>
    <property type="molecule type" value="Genomic_DNA"/>
</dbReference>
<dbReference type="RefSeq" id="WP_011848999.1">
    <property type="nucleotide sequence ID" value="NC_009073.1"/>
</dbReference>
<dbReference type="SMR" id="A3MSX5"/>
<dbReference type="STRING" id="410359.Pcal_0307"/>
<dbReference type="GeneID" id="4908886"/>
<dbReference type="KEGG" id="pcl:Pcal_0307"/>
<dbReference type="eggNOG" id="arCOG04183">
    <property type="taxonomic scope" value="Archaea"/>
</dbReference>
<dbReference type="HOGENOM" id="CLU_179743_1_0_2"/>
<dbReference type="OrthoDB" id="25142at2157"/>
<dbReference type="Proteomes" id="UP000001431">
    <property type="component" value="Chromosome"/>
</dbReference>
<dbReference type="GO" id="GO:1990904">
    <property type="term" value="C:ribonucleoprotein complex"/>
    <property type="evidence" value="ECO:0007669"/>
    <property type="project" value="UniProtKB-KW"/>
</dbReference>
<dbReference type="GO" id="GO:0005840">
    <property type="term" value="C:ribosome"/>
    <property type="evidence" value="ECO:0007669"/>
    <property type="project" value="UniProtKB-KW"/>
</dbReference>
<dbReference type="GO" id="GO:0003735">
    <property type="term" value="F:structural constituent of ribosome"/>
    <property type="evidence" value="ECO:0007669"/>
    <property type="project" value="InterPro"/>
</dbReference>
<dbReference type="GO" id="GO:0008270">
    <property type="term" value="F:zinc ion binding"/>
    <property type="evidence" value="ECO:0007669"/>
    <property type="project" value="UniProtKB-UniRule"/>
</dbReference>
<dbReference type="GO" id="GO:0006412">
    <property type="term" value="P:translation"/>
    <property type="evidence" value="ECO:0007669"/>
    <property type="project" value="UniProtKB-UniRule"/>
</dbReference>
<dbReference type="Gene3D" id="6.20.50.180">
    <property type="match status" value="1"/>
</dbReference>
<dbReference type="HAMAP" id="MF_00777">
    <property type="entry name" value="Ribosomal_eS31"/>
    <property type="match status" value="1"/>
</dbReference>
<dbReference type="InterPro" id="IPR002906">
    <property type="entry name" value="Ribosomal_eS31"/>
</dbReference>
<dbReference type="InterPro" id="IPR022845">
    <property type="entry name" value="Ribosomal_eS31_arc"/>
</dbReference>
<dbReference type="InterPro" id="IPR011332">
    <property type="entry name" value="Ribosomal_zn-bd"/>
</dbReference>
<dbReference type="NCBIfam" id="NF001669">
    <property type="entry name" value="PRK00432.1"/>
    <property type="match status" value="1"/>
</dbReference>
<dbReference type="Pfam" id="PF01599">
    <property type="entry name" value="Ribosomal_S27"/>
    <property type="match status" value="1"/>
</dbReference>
<dbReference type="SMART" id="SM01402">
    <property type="entry name" value="Ribosomal_S27"/>
    <property type="match status" value="1"/>
</dbReference>
<dbReference type="SUPFAM" id="SSF57829">
    <property type="entry name" value="Zn-binding ribosomal proteins"/>
    <property type="match status" value="1"/>
</dbReference>
<comment type="cofactor">
    <cofactor evidence="1">
        <name>Zn(2+)</name>
        <dbReference type="ChEBI" id="CHEBI:29105"/>
    </cofactor>
    <text evidence="1">Binds 1 zinc ion per subunit.</text>
</comment>
<comment type="subunit">
    <text evidence="1">Part of the 30S ribosomal subunit.</text>
</comment>
<comment type="similarity">
    <text evidence="1">Belongs to the eukaryotic ribosomal protein eS31 family.</text>
</comment>
<organism>
    <name type="scientific">Pyrobaculum calidifontis (strain DSM 21063 / JCM 11548 / VA1)</name>
    <dbReference type="NCBI Taxonomy" id="410359"/>
    <lineage>
        <taxon>Archaea</taxon>
        <taxon>Thermoproteota</taxon>
        <taxon>Thermoprotei</taxon>
        <taxon>Thermoproteales</taxon>
        <taxon>Thermoproteaceae</taxon>
        <taxon>Pyrobaculum</taxon>
    </lineage>
</organism>
<proteinExistence type="inferred from homology"/>
<accession>A3MSX5</accession>
<gene>
    <name evidence="1" type="primary">rps27ae</name>
    <name type="ordered locus">Pcal_0307</name>
</gene>
<keyword id="KW-0479">Metal-binding</keyword>
<keyword id="KW-0687">Ribonucleoprotein</keyword>
<keyword id="KW-0689">Ribosomal protein</keyword>
<keyword id="KW-0862">Zinc</keyword>
<keyword id="KW-0863">Zinc-finger</keyword>